<evidence type="ECO:0000255" key="1">
    <source>
        <dbReference type="HAMAP-Rule" id="MF_01207"/>
    </source>
</evidence>
<gene>
    <name evidence="1" type="primary">msrQ</name>
    <name type="ordered locus">PP_4675</name>
</gene>
<comment type="function">
    <text evidence="1">Part of the MsrPQ system that repairs oxidized periplasmic proteins containing methionine sulfoxide residues (Met-O), using respiratory chain electrons. Thus protects these proteins from oxidative-stress damage caused by reactive species of oxygen and chlorine generated by the host defense mechanisms. MsrPQ is essential for the maintenance of envelope integrity under bleach stress, rescuing a wide series of structurally unrelated periplasmic proteins from methionine oxidation. MsrQ provides electrons for reduction to the reductase catalytic subunit MsrP, using the quinone pool of the respiratory chain.</text>
</comment>
<comment type="cofactor">
    <cofactor evidence="1">
        <name>FMN</name>
        <dbReference type="ChEBI" id="CHEBI:58210"/>
    </cofactor>
    <text evidence="1">Binds 1 FMN per subunit.</text>
</comment>
<comment type="cofactor">
    <cofactor evidence="1">
        <name>heme b</name>
        <dbReference type="ChEBI" id="CHEBI:60344"/>
    </cofactor>
    <text evidence="1">Binds 1 heme b (iron(II)-protoporphyrin IX) group per subunit.</text>
</comment>
<comment type="subunit">
    <text evidence="1">Heterodimer of a catalytic subunit (MsrP) and a heme-binding subunit (MsrQ).</text>
</comment>
<comment type="subcellular location">
    <subcellularLocation>
        <location evidence="1">Cell inner membrane</location>
        <topology evidence="1">Multi-pass membrane protein</topology>
    </subcellularLocation>
</comment>
<comment type="similarity">
    <text evidence="1">Belongs to the MsrQ family.</text>
</comment>
<reference key="1">
    <citation type="journal article" date="2002" name="Environ. Microbiol.">
        <title>Complete genome sequence and comparative analysis of the metabolically versatile Pseudomonas putida KT2440.</title>
        <authorList>
            <person name="Nelson K.E."/>
            <person name="Weinel C."/>
            <person name="Paulsen I.T."/>
            <person name="Dodson R.J."/>
            <person name="Hilbert H."/>
            <person name="Martins dos Santos V.A.P."/>
            <person name="Fouts D.E."/>
            <person name="Gill S.R."/>
            <person name="Pop M."/>
            <person name="Holmes M."/>
            <person name="Brinkac L.M."/>
            <person name="Beanan M.J."/>
            <person name="DeBoy R.T."/>
            <person name="Daugherty S.C."/>
            <person name="Kolonay J.F."/>
            <person name="Madupu R."/>
            <person name="Nelson W.C."/>
            <person name="White O."/>
            <person name="Peterson J.D."/>
            <person name="Khouri H.M."/>
            <person name="Hance I."/>
            <person name="Chris Lee P."/>
            <person name="Holtzapple E.K."/>
            <person name="Scanlan D."/>
            <person name="Tran K."/>
            <person name="Moazzez A."/>
            <person name="Utterback T.R."/>
            <person name="Rizzo M."/>
            <person name="Lee K."/>
            <person name="Kosack D."/>
            <person name="Moestl D."/>
            <person name="Wedler H."/>
            <person name="Lauber J."/>
            <person name="Stjepandic D."/>
            <person name="Hoheisel J."/>
            <person name="Straetz M."/>
            <person name="Heim S."/>
            <person name="Kiewitz C."/>
            <person name="Eisen J.A."/>
            <person name="Timmis K.N."/>
            <person name="Duesterhoeft A."/>
            <person name="Tuemmler B."/>
            <person name="Fraser C.M."/>
        </authorList>
    </citation>
    <scope>NUCLEOTIDE SEQUENCE [LARGE SCALE GENOMIC DNA]</scope>
    <source>
        <strain>ATCC 47054 / DSM 6125 / CFBP 8728 / NCIMB 11950 / KT2440</strain>
    </source>
</reference>
<feature type="chain" id="PRO_0000091579" description="Protein-methionine-sulfoxide reductase heme-binding subunit MsrQ">
    <location>
        <begin position="1"/>
        <end position="197"/>
    </location>
</feature>
<feature type="transmembrane region" description="Helical" evidence="1">
    <location>
        <begin position="10"/>
        <end position="30"/>
    </location>
</feature>
<feature type="transmembrane region" description="Helical" evidence="1">
    <location>
        <begin position="42"/>
        <end position="62"/>
    </location>
</feature>
<feature type="transmembrane region" description="Helical" evidence="1">
    <location>
        <begin position="75"/>
        <end position="95"/>
    </location>
</feature>
<feature type="transmembrane region" description="Helical" evidence="1">
    <location>
        <begin position="110"/>
        <end position="130"/>
    </location>
</feature>
<feature type="transmembrane region" description="Helical" evidence="1">
    <location>
        <begin position="147"/>
        <end position="167"/>
    </location>
</feature>
<feature type="transmembrane region" description="Helical" evidence="1">
    <location>
        <begin position="169"/>
        <end position="189"/>
    </location>
</feature>
<name>MSRQ_PSEPK</name>
<proteinExistence type="inferred from homology"/>
<accession>Q88DZ3</accession>
<dbReference type="EMBL" id="AE015451">
    <property type="protein sequence ID" value="AAN70248.1"/>
    <property type="molecule type" value="Genomic_DNA"/>
</dbReference>
<dbReference type="RefSeq" id="NP_746784.1">
    <property type="nucleotide sequence ID" value="NC_002947.4"/>
</dbReference>
<dbReference type="RefSeq" id="WP_010955330.1">
    <property type="nucleotide sequence ID" value="NZ_CP169744.1"/>
</dbReference>
<dbReference type="SMR" id="Q88DZ3"/>
<dbReference type="STRING" id="160488.PP_4675"/>
<dbReference type="PaxDb" id="160488-PP_4675"/>
<dbReference type="GeneID" id="83682388"/>
<dbReference type="KEGG" id="ppu:PP_4675"/>
<dbReference type="PATRIC" id="fig|160488.4.peg.4983"/>
<dbReference type="eggNOG" id="COG2717">
    <property type="taxonomic scope" value="Bacteria"/>
</dbReference>
<dbReference type="HOGENOM" id="CLU_080662_0_1_6"/>
<dbReference type="OrthoDB" id="9788328at2"/>
<dbReference type="PhylomeDB" id="Q88DZ3"/>
<dbReference type="BioCyc" id="PPUT160488:G1G01-4993-MONOMER"/>
<dbReference type="Proteomes" id="UP000000556">
    <property type="component" value="Chromosome"/>
</dbReference>
<dbReference type="GO" id="GO:0005886">
    <property type="term" value="C:plasma membrane"/>
    <property type="evidence" value="ECO:0007669"/>
    <property type="project" value="UniProtKB-SubCell"/>
</dbReference>
<dbReference type="GO" id="GO:0009055">
    <property type="term" value="F:electron transfer activity"/>
    <property type="evidence" value="ECO:0007669"/>
    <property type="project" value="UniProtKB-UniRule"/>
</dbReference>
<dbReference type="GO" id="GO:0010181">
    <property type="term" value="F:FMN binding"/>
    <property type="evidence" value="ECO:0007669"/>
    <property type="project" value="UniProtKB-UniRule"/>
</dbReference>
<dbReference type="GO" id="GO:0020037">
    <property type="term" value="F:heme binding"/>
    <property type="evidence" value="ECO:0007669"/>
    <property type="project" value="UniProtKB-UniRule"/>
</dbReference>
<dbReference type="GO" id="GO:0046872">
    <property type="term" value="F:metal ion binding"/>
    <property type="evidence" value="ECO:0007669"/>
    <property type="project" value="UniProtKB-KW"/>
</dbReference>
<dbReference type="GO" id="GO:0016679">
    <property type="term" value="F:oxidoreductase activity, acting on diphenols and related substances as donors"/>
    <property type="evidence" value="ECO:0007669"/>
    <property type="project" value="TreeGrafter"/>
</dbReference>
<dbReference type="GO" id="GO:0030091">
    <property type="term" value="P:protein repair"/>
    <property type="evidence" value="ECO:0007669"/>
    <property type="project" value="UniProtKB-UniRule"/>
</dbReference>
<dbReference type="HAMAP" id="MF_01207">
    <property type="entry name" value="MsrQ"/>
    <property type="match status" value="1"/>
</dbReference>
<dbReference type="InterPro" id="IPR013130">
    <property type="entry name" value="Fe3_Rdtase_TM_dom"/>
</dbReference>
<dbReference type="InterPro" id="IPR022837">
    <property type="entry name" value="MsrQ-like"/>
</dbReference>
<dbReference type="NCBIfam" id="NF003831">
    <property type="entry name" value="PRK05419.1-2"/>
    <property type="match status" value="1"/>
</dbReference>
<dbReference type="PANTHER" id="PTHR36964">
    <property type="entry name" value="PROTEIN-METHIONINE-SULFOXIDE REDUCTASE HEME-BINDING SUBUNIT MSRQ"/>
    <property type="match status" value="1"/>
</dbReference>
<dbReference type="PANTHER" id="PTHR36964:SF1">
    <property type="entry name" value="PROTEIN-METHIONINE-SULFOXIDE REDUCTASE HEME-BINDING SUBUNIT MSRQ"/>
    <property type="match status" value="1"/>
</dbReference>
<dbReference type="Pfam" id="PF01794">
    <property type="entry name" value="Ferric_reduct"/>
    <property type="match status" value="1"/>
</dbReference>
<keyword id="KW-0997">Cell inner membrane</keyword>
<keyword id="KW-1003">Cell membrane</keyword>
<keyword id="KW-0249">Electron transport</keyword>
<keyword id="KW-0285">Flavoprotein</keyword>
<keyword id="KW-0288">FMN</keyword>
<keyword id="KW-0349">Heme</keyword>
<keyword id="KW-0408">Iron</keyword>
<keyword id="KW-0472">Membrane</keyword>
<keyword id="KW-0479">Metal-binding</keyword>
<keyword id="KW-1185">Reference proteome</keyword>
<keyword id="KW-0812">Transmembrane</keyword>
<keyword id="KW-1133">Transmembrane helix</keyword>
<keyword id="KW-0813">Transport</keyword>
<protein>
    <recommendedName>
        <fullName evidence="1">Protein-methionine-sulfoxide reductase heme-binding subunit MsrQ</fullName>
    </recommendedName>
    <alternativeName>
        <fullName evidence="1">Flavocytochrome MsrQ</fullName>
    </alternativeName>
</protein>
<sequence>MRYPWFRLAIFIVGCLFPVWWLYEAAMNLLGPDPGKIMMDRLGLGALTFLLVTLSMTPLQKLTGWSGWIVVRRQLGLWVFAYIVLHILCYLFFILGLDWGQLAVELRKRPYIIVGALGFLGLLVLAVTSNRYSQRRLGARWKKLHRLVYAVLGLGLLHFLWIVRSDLREWAIYAFIGAVLMVLRIPAVARALPKVAR</sequence>
<organism>
    <name type="scientific">Pseudomonas putida (strain ATCC 47054 / DSM 6125 / CFBP 8728 / NCIMB 11950 / KT2440)</name>
    <dbReference type="NCBI Taxonomy" id="160488"/>
    <lineage>
        <taxon>Bacteria</taxon>
        <taxon>Pseudomonadati</taxon>
        <taxon>Pseudomonadota</taxon>
        <taxon>Gammaproteobacteria</taxon>
        <taxon>Pseudomonadales</taxon>
        <taxon>Pseudomonadaceae</taxon>
        <taxon>Pseudomonas</taxon>
    </lineage>
</organism>